<evidence type="ECO:0000255" key="1">
    <source>
        <dbReference type="HAMAP-Rule" id="MF_00652"/>
    </source>
</evidence>
<reference key="1">
    <citation type="journal article" date="2009" name="BMC Genomics">
        <title>Analysis of the Rickettsia africae genome reveals that virulence acquisition in Rickettsia species may be explained by genome reduction.</title>
        <authorList>
            <person name="Fournier P.-E."/>
            <person name="El Karkouri K."/>
            <person name="Leroy Q."/>
            <person name="Robert C."/>
            <person name="Giumelli B."/>
            <person name="Renesto P."/>
            <person name="Socolovschi C."/>
            <person name="Parola P."/>
            <person name="Audic S."/>
            <person name="Raoult D."/>
        </authorList>
    </citation>
    <scope>NUCLEOTIDE SEQUENCE [LARGE SCALE GENOMIC DNA]</scope>
    <source>
        <strain>ESF-5</strain>
    </source>
</reference>
<gene>
    <name type="ordered locus">RAF_ORF0648</name>
</gene>
<dbReference type="EMBL" id="CP001612">
    <property type="protein sequence ID" value="ACP53548.1"/>
    <property type="molecule type" value="Genomic_DNA"/>
</dbReference>
<dbReference type="RefSeq" id="WP_012719750.1">
    <property type="nucleotide sequence ID" value="NC_012633.1"/>
</dbReference>
<dbReference type="SMR" id="C3PNN8"/>
<dbReference type="KEGG" id="raf:RAF_ORF0648"/>
<dbReference type="HOGENOM" id="CLU_061989_0_0_5"/>
<dbReference type="Proteomes" id="UP000002305">
    <property type="component" value="Chromosome"/>
</dbReference>
<dbReference type="GO" id="GO:0005829">
    <property type="term" value="C:cytosol"/>
    <property type="evidence" value="ECO:0007669"/>
    <property type="project" value="TreeGrafter"/>
</dbReference>
<dbReference type="GO" id="GO:0033194">
    <property type="term" value="P:response to hydroperoxide"/>
    <property type="evidence" value="ECO:0007669"/>
    <property type="project" value="TreeGrafter"/>
</dbReference>
<dbReference type="HAMAP" id="MF_00652">
    <property type="entry name" value="UPF0246"/>
    <property type="match status" value="1"/>
</dbReference>
<dbReference type="InterPro" id="IPR005583">
    <property type="entry name" value="YaaA"/>
</dbReference>
<dbReference type="PANTHER" id="PTHR30283:SF4">
    <property type="entry name" value="PEROXIDE STRESS RESISTANCE PROTEIN YAAA"/>
    <property type="match status" value="1"/>
</dbReference>
<dbReference type="PANTHER" id="PTHR30283">
    <property type="entry name" value="PEROXIDE STRESS RESPONSE PROTEIN YAAA"/>
    <property type="match status" value="1"/>
</dbReference>
<dbReference type="Pfam" id="PF03883">
    <property type="entry name" value="H2O2_YaaD"/>
    <property type="match status" value="1"/>
</dbReference>
<feature type="chain" id="PRO_1000212429" description="UPF0246 protein RAF_ORF0648">
    <location>
        <begin position="1"/>
        <end position="248"/>
    </location>
</feature>
<organism>
    <name type="scientific">Rickettsia africae (strain ESF-5)</name>
    <dbReference type="NCBI Taxonomy" id="347255"/>
    <lineage>
        <taxon>Bacteria</taxon>
        <taxon>Pseudomonadati</taxon>
        <taxon>Pseudomonadota</taxon>
        <taxon>Alphaproteobacteria</taxon>
        <taxon>Rickettsiales</taxon>
        <taxon>Rickettsiaceae</taxon>
        <taxon>Rickettsieae</taxon>
        <taxon>Rickettsia</taxon>
        <taxon>spotted fever group</taxon>
    </lineage>
</organism>
<sequence>MLAIISSAKTLNFEKLAPKTELTIPMFLTLTNKLLSTLQSYSENQLSKIMNISAKLAHINKERFKDFDNQESKAAIFAYAGDVFNNIHIEKLTNHALNFLQSHLLIISGLYGGLKPLDTIKPYRLEMATKLNEINLTNFWQDEITNYINKILAKQKNKYLLNLASQEYSSVINPNKLKYQLVNVHFKENRNGKLSTIGINAKKARGAMVKVIANNLIDSPELLKNFSYLGYAFSTKHSSDNELVFIKS</sequence>
<name>Y648_RICAE</name>
<proteinExistence type="inferred from homology"/>
<protein>
    <recommendedName>
        <fullName evidence="1">UPF0246 protein RAF_ORF0648</fullName>
    </recommendedName>
</protein>
<comment type="similarity">
    <text evidence="1">Belongs to the UPF0246 family.</text>
</comment>
<accession>C3PNN8</accession>